<proteinExistence type="inferred from homology"/>
<organism>
    <name type="scientific">Vibrio campbellii (strain ATCC BAA-1116)</name>
    <dbReference type="NCBI Taxonomy" id="2902295"/>
    <lineage>
        <taxon>Bacteria</taxon>
        <taxon>Pseudomonadati</taxon>
        <taxon>Pseudomonadota</taxon>
        <taxon>Gammaproteobacteria</taxon>
        <taxon>Vibrionales</taxon>
        <taxon>Vibrionaceae</taxon>
        <taxon>Vibrio</taxon>
    </lineage>
</organism>
<name>MINC_VIBC1</name>
<reference key="1">
    <citation type="submission" date="2007-08" db="EMBL/GenBank/DDBJ databases">
        <authorList>
            <consortium name="The Vibrio harveyi Genome Sequencing Project"/>
            <person name="Bassler B."/>
            <person name="Clifton S.W."/>
            <person name="Fulton L."/>
            <person name="Delehaunty K."/>
            <person name="Fronick C."/>
            <person name="Harrison M."/>
            <person name="Markivic C."/>
            <person name="Fulton R."/>
            <person name="Tin-Wollam A.-M."/>
            <person name="Shah N."/>
            <person name="Pepin K."/>
            <person name="Nash W."/>
            <person name="Thiruvilangam P."/>
            <person name="Bhonagiri V."/>
            <person name="Waters C."/>
            <person name="Tu K.C."/>
            <person name="Irgon J."/>
            <person name="Wilson R.K."/>
        </authorList>
    </citation>
    <scope>NUCLEOTIDE SEQUENCE [LARGE SCALE GENOMIC DNA]</scope>
    <source>
        <strain>ATCC BAA-1116 / BB120</strain>
    </source>
</reference>
<evidence type="ECO:0000255" key="1">
    <source>
        <dbReference type="HAMAP-Rule" id="MF_00267"/>
    </source>
</evidence>
<accession>A7N156</accession>
<keyword id="KW-0131">Cell cycle</keyword>
<keyword id="KW-0132">Cell division</keyword>
<keyword id="KW-0717">Septation</keyword>
<feature type="chain" id="PRO_1000047873" description="Probable septum site-determining protein MinC">
    <location>
        <begin position="1"/>
        <end position="220"/>
    </location>
</feature>
<protein>
    <recommendedName>
        <fullName evidence="1">Probable septum site-determining protein MinC</fullName>
    </recommendedName>
</protein>
<gene>
    <name evidence="1" type="primary">minC</name>
    <name type="ordered locus">VIBHAR_01386</name>
</gene>
<dbReference type="EMBL" id="CP000789">
    <property type="protein sequence ID" value="ABU70363.1"/>
    <property type="molecule type" value="Genomic_DNA"/>
</dbReference>
<dbReference type="RefSeq" id="WP_005437686.1">
    <property type="nucleotide sequence ID" value="NC_022269.1"/>
</dbReference>
<dbReference type="SMR" id="A7N156"/>
<dbReference type="GeneID" id="47098944"/>
<dbReference type="KEGG" id="vha:VIBHAR_01386"/>
<dbReference type="PATRIC" id="fig|338187.25.peg.1265"/>
<dbReference type="Proteomes" id="UP000008152">
    <property type="component" value="Chromosome I"/>
</dbReference>
<dbReference type="GO" id="GO:0000902">
    <property type="term" value="P:cell morphogenesis"/>
    <property type="evidence" value="ECO:0007669"/>
    <property type="project" value="InterPro"/>
</dbReference>
<dbReference type="GO" id="GO:0000917">
    <property type="term" value="P:division septum assembly"/>
    <property type="evidence" value="ECO:0007669"/>
    <property type="project" value="UniProtKB-KW"/>
</dbReference>
<dbReference type="GO" id="GO:0051302">
    <property type="term" value="P:regulation of cell division"/>
    <property type="evidence" value="ECO:0007669"/>
    <property type="project" value="InterPro"/>
</dbReference>
<dbReference type="GO" id="GO:1901891">
    <property type="term" value="P:regulation of cell septum assembly"/>
    <property type="evidence" value="ECO:0007669"/>
    <property type="project" value="InterPro"/>
</dbReference>
<dbReference type="Gene3D" id="2.160.20.70">
    <property type="match status" value="1"/>
</dbReference>
<dbReference type="Gene3D" id="3.30.70.260">
    <property type="match status" value="1"/>
</dbReference>
<dbReference type="HAMAP" id="MF_00267">
    <property type="entry name" value="MinC"/>
    <property type="match status" value="1"/>
</dbReference>
<dbReference type="InterPro" id="IPR016098">
    <property type="entry name" value="CAP/MinC_C"/>
</dbReference>
<dbReference type="InterPro" id="IPR013033">
    <property type="entry name" value="MinC"/>
</dbReference>
<dbReference type="InterPro" id="IPR036145">
    <property type="entry name" value="MinC_C_sf"/>
</dbReference>
<dbReference type="InterPro" id="IPR007874">
    <property type="entry name" value="MinC_N"/>
</dbReference>
<dbReference type="InterPro" id="IPR005526">
    <property type="entry name" value="Septum_form_inhib_MinC_C"/>
</dbReference>
<dbReference type="NCBIfam" id="TIGR01222">
    <property type="entry name" value="minC"/>
    <property type="match status" value="1"/>
</dbReference>
<dbReference type="PANTHER" id="PTHR34108">
    <property type="entry name" value="SEPTUM SITE-DETERMINING PROTEIN MINC"/>
    <property type="match status" value="1"/>
</dbReference>
<dbReference type="PANTHER" id="PTHR34108:SF1">
    <property type="entry name" value="SEPTUM SITE-DETERMINING PROTEIN MINC"/>
    <property type="match status" value="1"/>
</dbReference>
<dbReference type="Pfam" id="PF03775">
    <property type="entry name" value="MinC_C"/>
    <property type="match status" value="1"/>
</dbReference>
<dbReference type="Pfam" id="PF05209">
    <property type="entry name" value="MinC_N"/>
    <property type="match status" value="1"/>
</dbReference>
<dbReference type="SUPFAM" id="SSF63848">
    <property type="entry name" value="Cell-division inhibitor MinC, C-terminal domain"/>
    <property type="match status" value="1"/>
</dbReference>
<comment type="function">
    <text evidence="1">Cell division inhibitor that blocks the formation of polar Z ring septums. Rapidly oscillates between the poles of the cell to destabilize FtsZ filaments that have formed before they mature into polar Z rings. Prevents FtsZ polymerization.</text>
</comment>
<comment type="subunit">
    <text evidence="1">Interacts with MinD and FtsZ.</text>
</comment>
<comment type="similarity">
    <text evidence="1">Belongs to the MinC family.</text>
</comment>
<sequence>MTHSPDLKGSSFTLSVLHLSDNEIAKTVEFLQEKVSQAPSFFASAPLVINIAKVEGDIDFTALKQGIADAGFIPVGVTGCKDKRVQNLASEAGFAIMSASKSPTQAPAKMAPTKIVRTPVRSGQQIYAKDGDLVVLAHVSAGAEVIADGSIHIHGTLRGRAIAGASGQQEARIICHDLQAELVSIAGDYWLSDQIESEYWQKKVMISKAEESLHLETLTI</sequence>